<organism>
    <name type="scientific">Vesicomyosocius okutanii subsp. Calyptogena okutanii (strain HA)</name>
    <dbReference type="NCBI Taxonomy" id="412965"/>
    <lineage>
        <taxon>Bacteria</taxon>
        <taxon>Pseudomonadati</taxon>
        <taxon>Pseudomonadota</taxon>
        <taxon>Gammaproteobacteria</taxon>
        <taxon>Candidatus Pseudothioglobaceae</taxon>
        <taxon>Candidatus Vesicomyosocius</taxon>
    </lineage>
</organism>
<accession>A5CXI7</accession>
<protein>
    <recommendedName>
        <fullName evidence="1">Small ribosomal subunit protein uS11</fullName>
    </recommendedName>
    <alternativeName>
        <fullName evidence="2">30S ribosomal protein S11</fullName>
    </alternativeName>
</protein>
<evidence type="ECO:0000255" key="1">
    <source>
        <dbReference type="HAMAP-Rule" id="MF_01310"/>
    </source>
</evidence>
<evidence type="ECO:0000305" key="2"/>
<name>RS11_VESOH</name>
<comment type="function">
    <text evidence="1">Located on the platform of the 30S subunit, it bridges several disparate RNA helices of the 16S rRNA. Forms part of the Shine-Dalgarno cleft in the 70S ribosome.</text>
</comment>
<comment type="subunit">
    <text evidence="1">Part of the 30S ribosomal subunit. Interacts with proteins S7 and S18. Binds to IF-3.</text>
</comment>
<comment type="similarity">
    <text evidence="1">Belongs to the universal ribosomal protein uS11 family.</text>
</comment>
<reference key="1">
    <citation type="journal article" date="2007" name="Curr. Biol.">
        <title>Reduced genome of the thioautotrophic intracellular symbiont in a deep-sea clam, Calyptogena okutanii.</title>
        <authorList>
            <person name="Kuwahara H."/>
            <person name="Yoshida T."/>
            <person name="Takaki Y."/>
            <person name="Shimamura S."/>
            <person name="Nishi S."/>
            <person name="Harada M."/>
            <person name="Matsuyama K."/>
            <person name="Takishita K."/>
            <person name="Kawato M."/>
            <person name="Uematsu K."/>
            <person name="Fujiwara Y."/>
            <person name="Sato T."/>
            <person name="Kato C."/>
            <person name="Kitagawa M."/>
            <person name="Kato I."/>
            <person name="Maruyama T."/>
        </authorList>
    </citation>
    <scope>NUCLEOTIDE SEQUENCE [LARGE SCALE GENOMIC DNA]</scope>
    <source>
        <strain>HA</strain>
    </source>
</reference>
<proteinExistence type="inferred from homology"/>
<sequence length="128" mass="13509">MIAKSSSKKKSKKVITDGIAHIHATFNNTIVMITDRHGNTVCWATSGGSGFRGSRKSTPFAAQVAAGSCGEKALAFGMKNLEVHVKGPGPGRDSAIRGLNAQGLKIQSITDVTPIPHNGCRPSKKRRV</sequence>
<gene>
    <name evidence="1" type="primary">rpsK</name>
    <name type="ordered locus">COSY_0192</name>
</gene>
<dbReference type="EMBL" id="AP009247">
    <property type="protein sequence ID" value="BAF61322.1"/>
    <property type="molecule type" value="Genomic_DNA"/>
</dbReference>
<dbReference type="RefSeq" id="WP_011929592.1">
    <property type="nucleotide sequence ID" value="NC_009465.1"/>
</dbReference>
<dbReference type="SMR" id="A5CXI7"/>
<dbReference type="STRING" id="412965.COSY_0192"/>
<dbReference type="KEGG" id="vok:COSY_0192"/>
<dbReference type="eggNOG" id="COG0100">
    <property type="taxonomic scope" value="Bacteria"/>
</dbReference>
<dbReference type="HOGENOM" id="CLU_072439_5_0_6"/>
<dbReference type="OrthoDB" id="9806415at2"/>
<dbReference type="Proteomes" id="UP000000247">
    <property type="component" value="Chromosome"/>
</dbReference>
<dbReference type="GO" id="GO:1990904">
    <property type="term" value="C:ribonucleoprotein complex"/>
    <property type="evidence" value="ECO:0007669"/>
    <property type="project" value="UniProtKB-KW"/>
</dbReference>
<dbReference type="GO" id="GO:0005840">
    <property type="term" value="C:ribosome"/>
    <property type="evidence" value="ECO:0007669"/>
    <property type="project" value="UniProtKB-KW"/>
</dbReference>
<dbReference type="GO" id="GO:0019843">
    <property type="term" value="F:rRNA binding"/>
    <property type="evidence" value="ECO:0007669"/>
    <property type="project" value="UniProtKB-UniRule"/>
</dbReference>
<dbReference type="GO" id="GO:0003735">
    <property type="term" value="F:structural constituent of ribosome"/>
    <property type="evidence" value="ECO:0007669"/>
    <property type="project" value="InterPro"/>
</dbReference>
<dbReference type="GO" id="GO:0006412">
    <property type="term" value="P:translation"/>
    <property type="evidence" value="ECO:0007669"/>
    <property type="project" value="UniProtKB-UniRule"/>
</dbReference>
<dbReference type="FunFam" id="3.30.420.80:FF:000001">
    <property type="entry name" value="30S ribosomal protein S11"/>
    <property type="match status" value="1"/>
</dbReference>
<dbReference type="Gene3D" id="3.30.420.80">
    <property type="entry name" value="Ribosomal protein S11"/>
    <property type="match status" value="1"/>
</dbReference>
<dbReference type="HAMAP" id="MF_01310">
    <property type="entry name" value="Ribosomal_uS11"/>
    <property type="match status" value="1"/>
</dbReference>
<dbReference type="InterPro" id="IPR001971">
    <property type="entry name" value="Ribosomal_uS11"/>
</dbReference>
<dbReference type="InterPro" id="IPR019981">
    <property type="entry name" value="Ribosomal_uS11_bac-type"/>
</dbReference>
<dbReference type="InterPro" id="IPR018102">
    <property type="entry name" value="Ribosomal_uS11_CS"/>
</dbReference>
<dbReference type="InterPro" id="IPR036967">
    <property type="entry name" value="Ribosomal_uS11_sf"/>
</dbReference>
<dbReference type="NCBIfam" id="NF003698">
    <property type="entry name" value="PRK05309.1"/>
    <property type="match status" value="1"/>
</dbReference>
<dbReference type="NCBIfam" id="TIGR03632">
    <property type="entry name" value="uS11_bact"/>
    <property type="match status" value="1"/>
</dbReference>
<dbReference type="PANTHER" id="PTHR11759">
    <property type="entry name" value="40S RIBOSOMAL PROTEIN S14/30S RIBOSOMAL PROTEIN S11"/>
    <property type="match status" value="1"/>
</dbReference>
<dbReference type="Pfam" id="PF00411">
    <property type="entry name" value="Ribosomal_S11"/>
    <property type="match status" value="1"/>
</dbReference>
<dbReference type="PIRSF" id="PIRSF002131">
    <property type="entry name" value="Ribosomal_S11"/>
    <property type="match status" value="1"/>
</dbReference>
<dbReference type="SUPFAM" id="SSF53137">
    <property type="entry name" value="Translational machinery components"/>
    <property type="match status" value="1"/>
</dbReference>
<dbReference type="PROSITE" id="PS00054">
    <property type="entry name" value="RIBOSOMAL_S11"/>
    <property type="match status" value="1"/>
</dbReference>
<feature type="chain" id="PRO_0000294884" description="Small ribosomal subunit protein uS11">
    <location>
        <begin position="1"/>
        <end position="128"/>
    </location>
</feature>
<keyword id="KW-1185">Reference proteome</keyword>
<keyword id="KW-0687">Ribonucleoprotein</keyword>
<keyword id="KW-0689">Ribosomal protein</keyword>
<keyword id="KW-0694">RNA-binding</keyword>
<keyword id="KW-0699">rRNA-binding</keyword>